<name>RL22_PRUAP</name>
<organism>
    <name type="scientific">Prunus armeniaca phytoplasma</name>
    <dbReference type="NCBI Taxonomy" id="36589"/>
    <lineage>
        <taxon>Bacteria</taxon>
        <taxon>Bacillati</taxon>
        <taxon>Mycoplasmatota</taxon>
        <taxon>Mollicutes</taxon>
        <taxon>Acholeplasmatales</taxon>
        <taxon>Acholeplasmataceae</taxon>
        <taxon>Candidatus Phytoplasma</taxon>
    </lineage>
</organism>
<protein>
    <recommendedName>
        <fullName evidence="2">Large ribosomal subunit protein uL22</fullName>
    </recommendedName>
    <alternativeName>
        <fullName>50S ribosomal protein L22</fullName>
    </alternativeName>
</protein>
<keyword id="KW-0687">Ribonucleoprotein</keyword>
<keyword id="KW-0689">Ribosomal protein</keyword>
<keyword id="KW-0694">RNA-binding</keyword>
<keyword id="KW-0699">rRNA-binding</keyword>
<sequence>MISKAIIKKVSIAPRKARLVVDLIRGKEIKVAKAILMFTPKSASSIVLKLLNSAEANLAQNINLKSNDFYISEVYVNEG</sequence>
<gene>
    <name type="primary">rplV</name>
    <name type="synonym">rpl22</name>
</gene>
<comment type="function">
    <text evidence="1">This protein binds specifically to 23S rRNA; its binding is stimulated by other ribosomal proteins, e.g. L4, L17, and L20. It is important during the early stages of 50S assembly. It makes multiple contacts with different domains of the 23S rRNA in the assembled 50S subunit and ribosome (By similarity).</text>
</comment>
<comment type="function">
    <text evidence="1">The globular domain of the protein is located near the polypeptide exit tunnel on the outside of the subunit, while an extended beta-hairpin is found that lines the wall of the exit tunnel in the center of the 70S ribosome.</text>
</comment>
<comment type="subunit">
    <text evidence="1">Part of the 50S ribosomal subunit.</text>
</comment>
<comment type="similarity">
    <text evidence="2">Belongs to the universal ribosomal protein uL22 family.</text>
</comment>
<evidence type="ECO:0000250" key="1"/>
<evidence type="ECO:0000305" key="2"/>
<accession>Q44161</accession>
<dbReference type="EMBL" id="L26994">
    <property type="protein sequence ID" value="AAA83935.1"/>
    <property type="molecule type" value="Genomic_DNA"/>
</dbReference>
<dbReference type="SMR" id="Q44161"/>
<dbReference type="GO" id="GO:0022625">
    <property type="term" value="C:cytosolic large ribosomal subunit"/>
    <property type="evidence" value="ECO:0007669"/>
    <property type="project" value="TreeGrafter"/>
</dbReference>
<dbReference type="GO" id="GO:0019843">
    <property type="term" value="F:rRNA binding"/>
    <property type="evidence" value="ECO:0007669"/>
    <property type="project" value="UniProtKB-KW"/>
</dbReference>
<dbReference type="GO" id="GO:0003735">
    <property type="term" value="F:structural constituent of ribosome"/>
    <property type="evidence" value="ECO:0007669"/>
    <property type="project" value="InterPro"/>
</dbReference>
<dbReference type="GO" id="GO:0006412">
    <property type="term" value="P:translation"/>
    <property type="evidence" value="ECO:0007669"/>
    <property type="project" value="InterPro"/>
</dbReference>
<dbReference type="Gene3D" id="3.90.470.10">
    <property type="entry name" value="Ribosomal protein L22/L17"/>
    <property type="match status" value="1"/>
</dbReference>
<dbReference type="InterPro" id="IPR001063">
    <property type="entry name" value="Ribosomal_uL22"/>
</dbReference>
<dbReference type="InterPro" id="IPR047867">
    <property type="entry name" value="Ribosomal_uL22_bac/org-type"/>
</dbReference>
<dbReference type="InterPro" id="IPR036394">
    <property type="entry name" value="Ribosomal_uL22_sf"/>
</dbReference>
<dbReference type="PANTHER" id="PTHR13501">
    <property type="entry name" value="CHLOROPLAST 50S RIBOSOMAL PROTEIN L22-RELATED"/>
    <property type="match status" value="1"/>
</dbReference>
<dbReference type="PANTHER" id="PTHR13501:SF8">
    <property type="entry name" value="LARGE RIBOSOMAL SUBUNIT PROTEIN UL22M"/>
    <property type="match status" value="1"/>
</dbReference>
<dbReference type="Pfam" id="PF00237">
    <property type="entry name" value="Ribosomal_L22"/>
    <property type="match status" value="1"/>
</dbReference>
<dbReference type="SUPFAM" id="SSF54843">
    <property type="entry name" value="Ribosomal protein L22"/>
    <property type="match status" value="1"/>
</dbReference>
<proteinExistence type="inferred from homology"/>
<reference key="1">
    <citation type="journal article" date="1994" name="J. Bacteriol.">
        <title>Phylogeny of mycoplasmalike organisms (phytoplasmas): a basis for their classification.</title>
        <authorList>
            <person name="Gundersen D.E."/>
            <person name="Lee I.M."/>
            <person name="Rehner S.A."/>
            <person name="Davis R.E."/>
            <person name="Kingsbury D.T."/>
        </authorList>
    </citation>
    <scope>NUCLEOTIDE SEQUENCE [GENOMIC DNA]</scope>
</reference>
<feature type="chain" id="PRO_0000125204" description="Large ribosomal subunit protein uL22">
    <location>
        <begin position="1"/>
        <end position="79" status="greater than"/>
    </location>
</feature>
<feature type="non-terminal residue">
    <location>
        <position position="79"/>
    </location>
</feature>